<feature type="chain" id="PRO_0000046237" description="Probable phospholipid-transporting ATPase DNF3">
    <location>
        <begin position="1"/>
        <end position="1656"/>
    </location>
</feature>
<feature type="topological domain" description="Lumenal" evidence="16">
    <location>
        <begin position="1"/>
        <end position="164"/>
    </location>
</feature>
<feature type="transmembrane region" description="Helical" evidence="5">
    <location>
        <begin position="165"/>
        <end position="185"/>
    </location>
</feature>
<feature type="topological domain" description="Cytoplasmic" evidence="5">
    <location>
        <begin position="186"/>
        <end position="451"/>
    </location>
</feature>
<feature type="transmembrane region" description="Helical" evidence="5">
    <location>
        <begin position="452"/>
        <end position="472"/>
    </location>
</feature>
<feature type="topological domain" description="Lumenal" evidence="16">
    <location>
        <begin position="473"/>
        <end position="495"/>
    </location>
</feature>
<feature type="transmembrane region" description="Helical" evidence="5">
    <location>
        <begin position="496"/>
        <end position="516"/>
    </location>
</feature>
<feature type="topological domain" description="Cytoplasmic" evidence="5">
    <location>
        <begin position="517"/>
        <end position="1157"/>
    </location>
</feature>
<feature type="transmembrane region" description="Helical" evidence="5">
    <location>
        <begin position="1158"/>
        <end position="1178"/>
    </location>
</feature>
<feature type="topological domain" description="Lumenal" evidence="16">
    <location>
        <begin position="1179"/>
        <end position="1318"/>
    </location>
</feature>
<feature type="transmembrane region" description="Helical" evidence="5">
    <location>
        <begin position="1319"/>
        <end position="1339"/>
    </location>
</feature>
<feature type="topological domain" description="Cytoplasmic" evidence="5">
    <location>
        <begin position="1340"/>
        <end position="1365"/>
    </location>
</feature>
<feature type="transmembrane region" description="Helical" evidence="5">
    <location>
        <begin position="1366"/>
        <end position="1386"/>
    </location>
</feature>
<feature type="topological domain" description="Lumenal" evidence="16">
    <location>
        <begin position="1387"/>
        <end position="1395"/>
    </location>
</feature>
<feature type="transmembrane region" description="Helical" evidence="5">
    <location>
        <begin position="1396"/>
        <end position="1416"/>
    </location>
</feature>
<feature type="topological domain" description="Cytoplasmic" evidence="5">
    <location>
        <begin position="1417"/>
        <end position="1432"/>
    </location>
</feature>
<feature type="transmembrane region" description="Helical" evidence="5">
    <location>
        <begin position="1433"/>
        <end position="1453"/>
    </location>
</feature>
<feature type="topological domain" description="Lumenal" evidence="16">
    <location>
        <begin position="1454"/>
        <end position="1473"/>
    </location>
</feature>
<feature type="transmembrane region" description="Helical" evidence="5">
    <location>
        <begin position="1474"/>
        <end position="1494"/>
    </location>
</feature>
<feature type="topological domain" description="Cytoplasmic" evidence="9">
    <location>
        <begin position="1495"/>
        <end position="1656"/>
    </location>
</feature>
<feature type="region of interest" description="Disordered" evidence="6">
    <location>
        <begin position="36"/>
        <end position="74"/>
    </location>
</feature>
<feature type="region of interest" description="Disordered" evidence="6">
    <location>
        <begin position="1554"/>
        <end position="1576"/>
    </location>
</feature>
<feature type="compositionally biased region" description="Basic and acidic residues" evidence="6">
    <location>
        <begin position="51"/>
        <end position="60"/>
    </location>
</feature>
<feature type="active site" description="4-aspartylphosphate intermediate" evidence="14">
    <location>
        <position position="566"/>
    </location>
</feature>
<feature type="binding site" evidence="4">
    <location>
        <position position="566"/>
    </location>
    <ligand>
        <name>ATP</name>
        <dbReference type="ChEBI" id="CHEBI:30616"/>
    </ligand>
</feature>
<feature type="binding site" evidence="4">
    <location>
        <position position="566"/>
    </location>
    <ligand>
        <name>Mg(2+)</name>
        <dbReference type="ChEBI" id="CHEBI:18420"/>
    </ligand>
</feature>
<feature type="binding site" evidence="4">
    <location>
        <position position="567"/>
    </location>
    <ligand>
        <name>ATP</name>
        <dbReference type="ChEBI" id="CHEBI:30616"/>
    </ligand>
</feature>
<feature type="binding site" evidence="3">
    <location>
        <position position="568"/>
    </location>
    <ligand>
        <name>ATP</name>
        <dbReference type="ChEBI" id="CHEBI:30616"/>
    </ligand>
</feature>
<feature type="binding site" evidence="4">
    <location>
        <position position="568"/>
    </location>
    <ligand>
        <name>Mg(2+)</name>
        <dbReference type="ChEBI" id="CHEBI:18420"/>
    </ligand>
</feature>
<feature type="binding site" evidence="1">
    <location>
        <position position="765"/>
    </location>
    <ligand>
        <name>ATP</name>
        <dbReference type="ChEBI" id="CHEBI:30616"/>
    </ligand>
</feature>
<feature type="binding site" evidence="4">
    <location>
        <position position="813"/>
    </location>
    <ligand>
        <name>ATP</name>
        <dbReference type="ChEBI" id="CHEBI:30616"/>
    </ligand>
</feature>
<feature type="binding site" evidence="2">
    <location>
        <position position="815"/>
    </location>
    <ligand>
        <name>ATP</name>
        <dbReference type="ChEBI" id="CHEBI:30616"/>
    </ligand>
</feature>
<feature type="binding site" evidence="3">
    <location>
        <position position="818"/>
    </location>
    <ligand>
        <name>ATP</name>
        <dbReference type="ChEBI" id="CHEBI:30616"/>
    </ligand>
</feature>
<feature type="binding site" evidence="1">
    <location>
        <position position="838"/>
    </location>
    <ligand>
        <name>ATP</name>
        <dbReference type="ChEBI" id="CHEBI:30616"/>
    </ligand>
</feature>
<feature type="binding site" evidence="1">
    <location>
        <position position="1034"/>
    </location>
    <ligand>
        <name>ATP</name>
        <dbReference type="ChEBI" id="CHEBI:30616"/>
    </ligand>
</feature>
<feature type="binding site" evidence="3">
    <location>
        <position position="1035"/>
    </location>
    <ligand>
        <name>ATP</name>
        <dbReference type="ChEBI" id="CHEBI:30616"/>
    </ligand>
</feature>
<feature type="binding site" evidence="1">
    <location>
        <position position="1114"/>
    </location>
    <ligand>
        <name>ATP</name>
        <dbReference type="ChEBI" id="CHEBI:30616"/>
    </ligand>
</feature>
<feature type="binding site" evidence="1">
    <location>
        <position position="1115"/>
    </location>
    <ligand>
        <name>ATP</name>
        <dbReference type="ChEBI" id="CHEBI:30616"/>
    </ligand>
</feature>
<feature type="binding site" evidence="1">
    <location>
        <position position="1116"/>
    </location>
    <ligand>
        <name>ATP</name>
        <dbReference type="ChEBI" id="CHEBI:30616"/>
    </ligand>
</feature>
<feature type="binding site" evidence="5">
    <location>
        <begin position="1167"/>
        <end position="1174"/>
    </location>
    <ligand>
        <name>ATP</name>
        <dbReference type="ChEBI" id="CHEBI:30616"/>
    </ligand>
</feature>
<feature type="binding site" evidence="1">
    <location>
        <position position="1202"/>
    </location>
    <ligand>
        <name>ATP</name>
        <dbReference type="ChEBI" id="CHEBI:30616"/>
    </ligand>
</feature>
<feature type="binding site" evidence="1">
    <location>
        <position position="1208"/>
    </location>
    <ligand>
        <name>ATP</name>
        <dbReference type="ChEBI" id="CHEBI:30616"/>
    </ligand>
</feature>
<feature type="binding site" evidence="4">
    <location>
        <position position="1229"/>
    </location>
    <ligand>
        <name>Mg(2+)</name>
        <dbReference type="ChEBI" id="CHEBI:18420"/>
    </ligand>
</feature>
<feature type="binding site" evidence="4">
    <location>
        <position position="1232"/>
    </location>
    <ligand>
        <name>ATP</name>
        <dbReference type="ChEBI" id="CHEBI:30616"/>
    </ligand>
</feature>
<feature type="binding site" evidence="1">
    <location>
        <position position="1233"/>
    </location>
    <ligand>
        <name>ATP</name>
        <dbReference type="ChEBI" id="CHEBI:30616"/>
    </ligand>
</feature>
<feature type="modified residue" description="Phosphoserine" evidence="18">
    <location>
        <position position="627"/>
    </location>
</feature>
<accession>Q12674</accession>
<accession>D6VZY4</accession>
<protein>
    <recommendedName>
        <fullName>Probable phospholipid-transporting ATPase DNF3</fullName>
        <ecNumber evidence="15">7.6.2.1</ecNumber>
    </recommendedName>
    <alternativeName>
        <fullName>Aminophospholipid translocase</fullName>
        <shortName>APT</shortName>
    </alternativeName>
    <alternativeName>
        <fullName evidence="13">Phospholipid translocase</fullName>
        <shortName>PLT</shortName>
    </alternativeName>
</protein>
<organism>
    <name type="scientific">Saccharomyces cerevisiae (strain ATCC 204508 / S288c)</name>
    <name type="common">Baker's yeast</name>
    <dbReference type="NCBI Taxonomy" id="559292"/>
    <lineage>
        <taxon>Eukaryota</taxon>
        <taxon>Fungi</taxon>
        <taxon>Dikarya</taxon>
        <taxon>Ascomycota</taxon>
        <taxon>Saccharomycotina</taxon>
        <taxon>Saccharomycetes</taxon>
        <taxon>Saccharomycetales</taxon>
        <taxon>Saccharomycetaceae</taxon>
        <taxon>Saccharomyces</taxon>
    </lineage>
</organism>
<gene>
    <name type="primary">DNF3</name>
    <name type="ordered locus">YMR162C</name>
    <name type="ORF">YM8520.11C</name>
</gene>
<dbReference type="EC" id="7.6.2.1" evidence="15"/>
<dbReference type="EMBL" id="Z49705">
    <property type="protein sequence ID" value="CAA89798.1"/>
    <property type="molecule type" value="Genomic_DNA"/>
</dbReference>
<dbReference type="EMBL" id="BK006946">
    <property type="protein sequence ID" value="DAA10058.1"/>
    <property type="molecule type" value="Genomic_DNA"/>
</dbReference>
<dbReference type="PIR" id="S54520">
    <property type="entry name" value="S54520"/>
</dbReference>
<dbReference type="RefSeq" id="NP_013885.1">
    <property type="nucleotide sequence ID" value="NM_001182666.1"/>
</dbReference>
<dbReference type="SMR" id="Q12674"/>
<dbReference type="BioGRID" id="35339">
    <property type="interactions" value="75"/>
</dbReference>
<dbReference type="ComplexPortal" id="CPX-1026">
    <property type="entry name" value="DNF3-CRF1 P4-ATPase complex"/>
</dbReference>
<dbReference type="FunCoup" id="Q12674">
    <property type="interactions" value="66"/>
</dbReference>
<dbReference type="IntAct" id="Q12674">
    <property type="interactions" value="8"/>
</dbReference>
<dbReference type="MINT" id="Q12674"/>
<dbReference type="STRING" id="4932.YMR162C"/>
<dbReference type="TCDB" id="3.A.3.8.20">
    <property type="family name" value="the p-type atpase (p-atpase) superfamily"/>
</dbReference>
<dbReference type="iPTMnet" id="Q12674"/>
<dbReference type="PaxDb" id="4932-YMR162C"/>
<dbReference type="PeptideAtlas" id="Q12674"/>
<dbReference type="EnsemblFungi" id="YMR162C_mRNA">
    <property type="protein sequence ID" value="YMR162C"/>
    <property type="gene ID" value="YMR162C"/>
</dbReference>
<dbReference type="GeneID" id="855197"/>
<dbReference type="KEGG" id="sce:YMR162C"/>
<dbReference type="AGR" id="SGD:S000004772"/>
<dbReference type="SGD" id="S000004772">
    <property type="gene designation" value="DNF3"/>
</dbReference>
<dbReference type="VEuPathDB" id="FungiDB:YMR162C"/>
<dbReference type="eggNOG" id="KOG0206">
    <property type="taxonomic scope" value="Eukaryota"/>
</dbReference>
<dbReference type="HOGENOM" id="CLU_000846_5_2_1"/>
<dbReference type="InParanoid" id="Q12674"/>
<dbReference type="OMA" id="GWFLWNI"/>
<dbReference type="OrthoDB" id="377733at2759"/>
<dbReference type="BioCyc" id="YEAST:G3O-32852-MONOMER"/>
<dbReference type="BRENDA" id="7.6.2.1">
    <property type="organism ID" value="984"/>
</dbReference>
<dbReference type="Reactome" id="R-SCE-6798695">
    <property type="pathway name" value="Neutrophil degranulation"/>
</dbReference>
<dbReference type="Reactome" id="R-SCE-936837">
    <property type="pathway name" value="Ion transport by P-type ATPases"/>
</dbReference>
<dbReference type="BioGRID-ORCS" id="855197">
    <property type="hits" value="0 hits in 10 CRISPR screens"/>
</dbReference>
<dbReference type="PRO" id="PR:Q12674"/>
<dbReference type="Proteomes" id="UP000002311">
    <property type="component" value="Chromosome XIII"/>
</dbReference>
<dbReference type="RNAct" id="Q12674">
    <property type="molecule type" value="protein"/>
</dbReference>
<dbReference type="GO" id="GO:0005783">
    <property type="term" value="C:endoplasmic reticulum"/>
    <property type="evidence" value="ECO:0007005"/>
    <property type="project" value="SGD"/>
</dbReference>
<dbReference type="GO" id="GO:0010008">
    <property type="term" value="C:endosome membrane"/>
    <property type="evidence" value="ECO:0007669"/>
    <property type="project" value="UniProtKB-SubCell"/>
</dbReference>
<dbReference type="GO" id="GO:0070867">
    <property type="term" value="C:mating projection tip membrane"/>
    <property type="evidence" value="ECO:0000314"/>
    <property type="project" value="SGD"/>
</dbReference>
<dbReference type="GO" id="GO:1990531">
    <property type="term" value="C:phospholipid-translocating ATPase complex"/>
    <property type="evidence" value="ECO:0000353"/>
    <property type="project" value="ComplexPortal"/>
</dbReference>
<dbReference type="GO" id="GO:0005886">
    <property type="term" value="C:plasma membrane"/>
    <property type="evidence" value="ECO:0000314"/>
    <property type="project" value="SGD"/>
</dbReference>
<dbReference type="GO" id="GO:0005802">
    <property type="term" value="C:trans-Golgi network"/>
    <property type="evidence" value="ECO:0000314"/>
    <property type="project" value="SGD"/>
</dbReference>
<dbReference type="GO" id="GO:0030140">
    <property type="term" value="C:trans-Golgi network transport vesicle"/>
    <property type="evidence" value="ECO:0000314"/>
    <property type="project" value="SGD"/>
</dbReference>
<dbReference type="GO" id="GO:0005524">
    <property type="term" value="F:ATP binding"/>
    <property type="evidence" value="ECO:0007669"/>
    <property type="project" value="UniProtKB-KW"/>
</dbReference>
<dbReference type="GO" id="GO:0016887">
    <property type="term" value="F:ATP hydrolysis activity"/>
    <property type="evidence" value="ECO:0007669"/>
    <property type="project" value="InterPro"/>
</dbReference>
<dbReference type="GO" id="GO:0140326">
    <property type="term" value="F:ATPase-coupled intramembrane lipid transporter activity"/>
    <property type="evidence" value="ECO:0000318"/>
    <property type="project" value="GO_Central"/>
</dbReference>
<dbReference type="GO" id="GO:0000287">
    <property type="term" value="F:magnesium ion binding"/>
    <property type="evidence" value="ECO:0007669"/>
    <property type="project" value="InterPro"/>
</dbReference>
<dbReference type="GO" id="GO:0140345">
    <property type="term" value="F:phosphatidylcholine flippase activity"/>
    <property type="evidence" value="ECO:0000315"/>
    <property type="project" value="SGD"/>
</dbReference>
<dbReference type="GO" id="GO:0090554">
    <property type="term" value="F:phosphatidylcholine floppase activity"/>
    <property type="evidence" value="ECO:0007669"/>
    <property type="project" value="RHEA"/>
</dbReference>
<dbReference type="GO" id="GO:0090555">
    <property type="term" value="F:phosphatidylethanolamine flippase activity"/>
    <property type="evidence" value="ECO:0000315"/>
    <property type="project" value="SGD"/>
</dbReference>
<dbReference type="GO" id="GO:0140346">
    <property type="term" value="F:phosphatidylserine flippase activity"/>
    <property type="evidence" value="ECO:0000315"/>
    <property type="project" value="SGD"/>
</dbReference>
<dbReference type="GO" id="GO:0032456">
    <property type="term" value="P:endocytic recycling"/>
    <property type="evidence" value="ECO:0000318"/>
    <property type="project" value="GO_Central"/>
</dbReference>
<dbReference type="GO" id="GO:0045332">
    <property type="term" value="P:phospholipid translocation"/>
    <property type="evidence" value="ECO:0000315"/>
    <property type="project" value="SGD"/>
</dbReference>
<dbReference type="GO" id="GO:0006892">
    <property type="term" value="P:post-Golgi vesicle-mediated transport"/>
    <property type="evidence" value="ECO:0000318"/>
    <property type="project" value="GO_Central"/>
</dbReference>
<dbReference type="GO" id="GO:0007124">
    <property type="term" value="P:pseudohyphal growth"/>
    <property type="evidence" value="ECO:0000315"/>
    <property type="project" value="SGD"/>
</dbReference>
<dbReference type="CDD" id="cd02073">
    <property type="entry name" value="P-type_ATPase_APLT_Dnf-like"/>
    <property type="match status" value="1"/>
</dbReference>
<dbReference type="FunFam" id="1.20.1110.10:FF:000066">
    <property type="entry name" value="Phospholipid-transporting ATPase"/>
    <property type="match status" value="1"/>
</dbReference>
<dbReference type="FunFam" id="2.70.150.10:FF:000105">
    <property type="entry name" value="Phospholipid-transporting ATPase"/>
    <property type="match status" value="1"/>
</dbReference>
<dbReference type="FunFam" id="3.40.1110.10:FF:000090">
    <property type="entry name" value="Phospholipid-transporting ATPase"/>
    <property type="match status" value="1"/>
</dbReference>
<dbReference type="FunFam" id="3.40.50.1000:FF:000172">
    <property type="entry name" value="Phospholipid-transporting ATPase"/>
    <property type="match status" value="1"/>
</dbReference>
<dbReference type="Gene3D" id="3.40.1110.10">
    <property type="entry name" value="Calcium-transporting ATPase, cytoplasmic domain N"/>
    <property type="match status" value="2"/>
</dbReference>
<dbReference type="Gene3D" id="2.70.150.10">
    <property type="entry name" value="Calcium-transporting ATPase, cytoplasmic transduction domain A"/>
    <property type="match status" value="2"/>
</dbReference>
<dbReference type="Gene3D" id="1.20.1110.10">
    <property type="entry name" value="Calcium-transporting ATPase, transmembrane domain"/>
    <property type="match status" value="1"/>
</dbReference>
<dbReference type="Gene3D" id="3.40.50.1000">
    <property type="entry name" value="HAD superfamily/HAD-like"/>
    <property type="match status" value="2"/>
</dbReference>
<dbReference type="InterPro" id="IPR023299">
    <property type="entry name" value="ATPase_P-typ_cyto_dom_N"/>
</dbReference>
<dbReference type="InterPro" id="IPR018303">
    <property type="entry name" value="ATPase_P-typ_P_site"/>
</dbReference>
<dbReference type="InterPro" id="IPR023298">
    <property type="entry name" value="ATPase_P-typ_TM_dom_sf"/>
</dbReference>
<dbReference type="InterPro" id="IPR008250">
    <property type="entry name" value="ATPase_P-typ_transduc_dom_A_sf"/>
</dbReference>
<dbReference type="InterPro" id="IPR036412">
    <property type="entry name" value="HAD-like_sf"/>
</dbReference>
<dbReference type="InterPro" id="IPR023214">
    <property type="entry name" value="HAD_sf"/>
</dbReference>
<dbReference type="InterPro" id="IPR006539">
    <property type="entry name" value="P-type_ATPase_IV"/>
</dbReference>
<dbReference type="InterPro" id="IPR032631">
    <property type="entry name" value="P-type_ATPase_N"/>
</dbReference>
<dbReference type="InterPro" id="IPR001757">
    <property type="entry name" value="P_typ_ATPase"/>
</dbReference>
<dbReference type="InterPro" id="IPR032630">
    <property type="entry name" value="P_typ_ATPase_c"/>
</dbReference>
<dbReference type="NCBIfam" id="TIGR01652">
    <property type="entry name" value="ATPase-Plipid"/>
    <property type="match status" value="1"/>
</dbReference>
<dbReference type="NCBIfam" id="TIGR01494">
    <property type="entry name" value="ATPase_P-type"/>
    <property type="match status" value="1"/>
</dbReference>
<dbReference type="PANTHER" id="PTHR24092:SF174">
    <property type="entry name" value="PHOSPHOLIPID-TRANSPORTING ATPASE DNF3-RELATED"/>
    <property type="match status" value="1"/>
</dbReference>
<dbReference type="PANTHER" id="PTHR24092">
    <property type="entry name" value="PROBABLE PHOSPHOLIPID-TRANSPORTING ATPASE"/>
    <property type="match status" value="1"/>
</dbReference>
<dbReference type="Pfam" id="PF13246">
    <property type="entry name" value="Cation_ATPase"/>
    <property type="match status" value="1"/>
</dbReference>
<dbReference type="Pfam" id="PF00122">
    <property type="entry name" value="E1-E2_ATPase"/>
    <property type="match status" value="1"/>
</dbReference>
<dbReference type="Pfam" id="PF00702">
    <property type="entry name" value="Hydrolase"/>
    <property type="match status" value="1"/>
</dbReference>
<dbReference type="Pfam" id="PF16212">
    <property type="entry name" value="PhoLip_ATPase_C"/>
    <property type="match status" value="1"/>
</dbReference>
<dbReference type="Pfam" id="PF16209">
    <property type="entry name" value="PhoLip_ATPase_N"/>
    <property type="match status" value="1"/>
</dbReference>
<dbReference type="SUPFAM" id="SSF81653">
    <property type="entry name" value="Calcium ATPase, transduction domain A"/>
    <property type="match status" value="1"/>
</dbReference>
<dbReference type="SUPFAM" id="SSF81665">
    <property type="entry name" value="Calcium ATPase, transmembrane domain M"/>
    <property type="match status" value="1"/>
</dbReference>
<dbReference type="SUPFAM" id="SSF56784">
    <property type="entry name" value="HAD-like"/>
    <property type="match status" value="1"/>
</dbReference>
<dbReference type="SUPFAM" id="SSF81660">
    <property type="entry name" value="Metal cation-transporting ATPase, ATP-binding domain N"/>
    <property type="match status" value="1"/>
</dbReference>
<dbReference type="PROSITE" id="PS00154">
    <property type="entry name" value="ATPASE_E1_E2"/>
    <property type="match status" value="1"/>
</dbReference>
<reference key="1">
    <citation type="journal article" date="1997" name="Nature">
        <title>The nucleotide sequence of Saccharomyces cerevisiae chromosome XIII.</title>
        <authorList>
            <person name="Bowman S."/>
            <person name="Churcher C.M."/>
            <person name="Badcock K."/>
            <person name="Brown D."/>
            <person name="Chillingworth T."/>
            <person name="Connor R."/>
            <person name="Dedman K."/>
            <person name="Devlin K."/>
            <person name="Gentles S."/>
            <person name="Hamlin N."/>
            <person name="Hunt S."/>
            <person name="Jagels K."/>
            <person name="Lye G."/>
            <person name="Moule S."/>
            <person name="Odell C."/>
            <person name="Pearson D."/>
            <person name="Rajandream M.A."/>
            <person name="Rice P."/>
            <person name="Skelton J."/>
            <person name="Walsh S.V."/>
            <person name="Whitehead S."/>
            <person name="Barrell B.G."/>
        </authorList>
    </citation>
    <scope>NUCLEOTIDE SEQUENCE [LARGE SCALE GENOMIC DNA]</scope>
    <source>
        <strain>ATCC 204508 / S288c</strain>
    </source>
</reference>
<reference key="2">
    <citation type="journal article" date="2014" name="G3 (Bethesda)">
        <title>The reference genome sequence of Saccharomyces cerevisiae: Then and now.</title>
        <authorList>
            <person name="Engel S.R."/>
            <person name="Dietrich F.S."/>
            <person name="Fisk D.G."/>
            <person name="Binkley G."/>
            <person name="Balakrishnan R."/>
            <person name="Costanzo M.C."/>
            <person name="Dwight S.S."/>
            <person name="Hitz B.C."/>
            <person name="Karra K."/>
            <person name="Nash R.S."/>
            <person name="Weng S."/>
            <person name="Wong E.D."/>
            <person name="Lloyd P."/>
            <person name="Skrzypek M.S."/>
            <person name="Miyasato S.R."/>
            <person name="Simison M."/>
            <person name="Cherry J.M."/>
        </authorList>
    </citation>
    <scope>GENOME REANNOTATION</scope>
    <source>
        <strain>ATCC 204508 / S288c</strain>
    </source>
</reference>
<reference key="3">
    <citation type="journal article" date="2003" name="Mol. Biol. Cell">
        <title>Drs2p-related P-type ATPases Dnf1p and Dnf2p are required for phospholipid translocation across the yeast plasma membrane and serve a role in endocytosis.</title>
        <authorList>
            <person name="Pomorski T."/>
            <person name="Lombardi R."/>
            <person name="Riezman H."/>
            <person name="Devaux P.F."/>
            <person name="van Meer G."/>
            <person name="Holthuis J.C."/>
        </authorList>
    </citation>
    <scope>SUBCELLULAR LOCATION</scope>
</reference>
<reference key="4">
    <citation type="journal article" date="2006" name="Mol. Biol. Cell">
        <title>Loss of P4 ATPases Drs2p and Dnf3p disrupts aminophospholipid transport and asymmetry in yeast post-Golgi secretory vesicles.</title>
        <authorList>
            <person name="Alder-Baerens N."/>
            <person name="Lisman Q."/>
            <person name="Luong L."/>
            <person name="Pomorski T."/>
            <person name="Holthuis J.C."/>
        </authorList>
    </citation>
    <scope>FUNCTION</scope>
    <scope>CATALYTIC ACTIVITY</scope>
    <scope>SUBCELLULAR LOCATION</scope>
    <scope>DISRUPTION PHENOTYPE</scope>
</reference>
<reference key="5">
    <citation type="journal article" date="2006" name="Proc. Natl. Acad. Sci. U.S.A.">
        <title>A global topology map of the Saccharomyces cerevisiae membrane proteome.</title>
        <authorList>
            <person name="Kim H."/>
            <person name="Melen K."/>
            <person name="Oesterberg M."/>
            <person name="von Heijne G."/>
        </authorList>
    </citation>
    <scope>TOPOLOGY [LARGE SCALE ANALYSIS]</scope>
    <source>
        <strain>ATCC 208353 / W303-1A</strain>
    </source>
</reference>
<reference key="6">
    <citation type="journal article" date="2007" name="Mol. Biol. Cell">
        <title>Endocytic recycling in yeast is regulated by putative phospholipid translocases and the Ypt31p/32p-Rcy1p pathway.</title>
        <authorList>
            <person name="Furuta N."/>
            <person name="Fujimura-Kamada K."/>
            <person name="Saito K."/>
            <person name="Yamamoto T."/>
            <person name="Tanaka K."/>
        </authorList>
    </citation>
    <scope>FUNCTION</scope>
    <scope>SUBCELLULAR LOCATION</scope>
    <scope>INTERACTION WITH YNR048W</scope>
</reference>
<reference key="7">
    <citation type="journal article" date="2008" name="Mol. Cell. Proteomics">
        <title>A multidimensional chromatography technology for in-depth phosphoproteome analysis.</title>
        <authorList>
            <person name="Albuquerque C.P."/>
            <person name="Smolka M.B."/>
            <person name="Payne S.H."/>
            <person name="Bafna V."/>
            <person name="Eng J."/>
            <person name="Zhou H."/>
        </authorList>
    </citation>
    <scope>IDENTIFICATION BY MASS SPECTROMETRY [LARGE SCALE ANALYSIS]</scope>
</reference>
<reference key="8">
    <citation type="journal article" date="2009" name="J. Biol. Chem.">
        <title>Cdc50p plays a vital role in the ATPase reaction cycle of the putative aminophospholipid transporter Drs2p.</title>
        <authorList>
            <person name="Lenoir G."/>
            <person name="Williamson P."/>
            <person name="Puts C.F."/>
            <person name="Holthuis J.C."/>
        </authorList>
    </citation>
    <scope>INTERACTION WITH YNR048W</scope>
</reference>
<reference key="9">
    <citation type="journal article" date="2009" name="Science">
        <title>Global analysis of Cdk1 substrate phosphorylation sites provides insights into evolution.</title>
        <authorList>
            <person name="Holt L.J."/>
            <person name="Tuch B.B."/>
            <person name="Villen J."/>
            <person name="Johnson A.D."/>
            <person name="Gygi S.P."/>
            <person name="Morgan D.O."/>
        </authorList>
    </citation>
    <scope>PHOSPHORYLATION [LARGE SCALE ANALYSIS] AT SER-627</scope>
    <scope>IDENTIFICATION BY MASS SPECTROMETRY [LARGE SCALE ANALYSIS]</scope>
</reference>
<reference key="10">
    <citation type="journal article" date="2012" name="J. Biol. Chem.">
        <title>Mapping functional interactions in a heterodimeric phospholipid pump.</title>
        <authorList>
            <person name="Puts C.F."/>
            <person name="Panatala R."/>
            <person name="Hennrich H."/>
            <person name="Tsareva A."/>
            <person name="Williamson P."/>
            <person name="Holthuis J.C."/>
        </authorList>
    </citation>
    <scope>IDENTIFICATION IN A COMPLEX WITH YNR048W</scope>
    <scope>INTERACTION WITH YNR048W</scope>
</reference>
<keyword id="KW-0067">ATP-binding</keyword>
<keyword id="KW-0967">Endosome</keyword>
<keyword id="KW-0333">Golgi apparatus</keyword>
<keyword id="KW-0445">Lipid transport</keyword>
<keyword id="KW-0460">Magnesium</keyword>
<keyword id="KW-0472">Membrane</keyword>
<keyword id="KW-0479">Metal-binding</keyword>
<keyword id="KW-0547">Nucleotide-binding</keyword>
<keyword id="KW-0597">Phosphoprotein</keyword>
<keyword id="KW-1185">Reference proteome</keyword>
<keyword id="KW-1278">Translocase</keyword>
<keyword id="KW-0812">Transmembrane</keyword>
<keyword id="KW-1133">Transmembrane helix</keyword>
<keyword id="KW-0813">Transport</keyword>
<sequence length="1656" mass="188319">MGIADGQRRRSSSLRTQMFNKHLYDKYRGRTDDEIELEDINESKTFSGSDNNDKDDRDETSGNYAAEEDYEMEEYGSPDVSYSIITKILDTILDRRRTFHSKDGRHIPIILDHNAIEYKQAATKRDGHLIDERFNKPYCDNRITSSRYTFYSFLPRQLYAQFSKLANTYFFIVAVLQMIPGWSTTGTYTTIIPLCVFMGISMTREAWDDFRRHRLDKEENNKPVGVLVKDGNNDAQEVYTLPSSVVSSTAYLTKSAAAENNPPLNDDRNSSQGHFLDTHFNNFELLKNKYNVHIHQKKWEKLRVGDFVLLTQDDWVPADLLLLTCDGENSECFVETMALDGETNLKSKQPHPELNKLTKAASGLANINAQVTVEDPNIDLYNFEGNLELKNHRNDTIMKYPLGPDNVIYRGSILRNTQNVVGMVIFSGEETKIRMNALKNPRTKAPKLQRKINMIIVFMVFVVATISLFSYLGHVLHKKKYIDQNKAWYLFQADAGVAPTIMSFIIMYNTVIPLSLYVTMEIIKVVQSKMMEWDIDMYHAETNTPCESRTATILEELGQVSYIFSDKTGTLTDNKMIFRKFSLCGSSWLHNVDLGNSEDNFEDNRDNTNSLRLPPKAHNGSSIDVVSIGDQNVLDRLGFSDAPIEKGHRPSLDNFPKSRNSIEYKGNSSAIYTGRPSMRSLFGKDNSHLSKQASVISPSETFSENIKSSFDLIQFIQRYPTALFSQKAKFFFLSLALCHSCLPKKTHNESIGEDSIEYQSSSPDELALVTAARDLGYIVLNRNAQILTIKTFPDGFDGEAKLENYEILNYIDFNSQRKRMSVLVRMPNQPNQVLLICKGADNVIMERLHDRELAAKKMADICTSTKERKDAEAELVLQQRKSLERMVDEEAMARTSLRNSLSSVPRASLSLQAVRKSLSMKNSRTRDPEKQIDSIDQFLETVKKSDQEIGSVVNKSRKSLHKQQIEKYGPRISIDGTHFPNNNVPIDTRKEGLQHDYDTEILEHIGSDELILNEEYVIERTLQAIDEFSTEGLRTLVYAYKWIDIGQYENWNKRYHQAKTSLTDRKIKVDEAGAEIEDGLNLLGVTAIEDKLQDGVSEAIEKIRRAGIKMWMLTGDKRETAINIGYSCMLIKDYSTVVILTTTDENIISKMNAVSQEVDSGNIAHCVVVIDGATMAMFEGNPTYMSVFVELCTKTDSVICCRASPSQKALMVSNIRNTDPNLVTLAIGDGANDIAMIQSADIGVGIAGKEGLQASRVSDYSIGQFRFLLKLLFVHGRYNYIRTSKFMLCTFYKEITFYFTQLIYQRYTMFSGSSLYEPWSLSMFNTLFTSLPVLCIGMFEKDLKPMTLLTVPELYSYGRLSQGFNWLIFMEWVILATTNSLIITFLNVVMWGMSSLSDNTMYPLGLINFTAIVALINVKSQFVEMHNRNWLAFTSVVLSCGGWLVWCCALPILNNTDQIYDVAYGFYNHFGKDITFWCTSLVLALLPITLDIVYKTFKVMIWPSDSDIFAELEQKSDIRKKLELGAYSEMRQGWTWDKDPSTFTRYTDKVLSRPRTNSRASAKTHNSSIYSMSNGNVDHSSKKNFFGNSSKKSSERYEVLPSGKLIKRPSLKTQSSKDSIGGNITTKLTKKLKLPSRNVEDEDVNQIIQARLKDLE</sequence>
<comment type="function">
    <text evidence="8 17">Catalytic component of a P4-ATPase flippase complex which catalyzes the hydrolysis of ATP coupled to the transport of phosphatidylcholine and small amounts of phosphatidylethanolamine from the lumen to the cytosolic leaflet of the trans-Golgi network and ensures the maintenance of asymmetric distribution of phospholipids (PubMed:16452632). May be involved in transport from early endosomes to the trans-Golgi network (TGN) (Probable).</text>
</comment>
<comment type="catalytic activity">
    <reaction evidence="15">
        <text>ATP + H2O + phospholipidSide 1 = ADP + phosphate + phospholipidSide 2.</text>
        <dbReference type="EC" id="7.6.2.1"/>
    </reaction>
</comment>
<comment type="catalytic activity">
    <reaction evidence="15">
        <text>a 1,2-diacyl-sn-glycero-3-phosphocholine(out) + ATP + H2O = a 1,2-diacyl-sn-glycero-3-phosphocholine(in) + ADP + phosphate + H(+)</text>
        <dbReference type="Rhea" id="RHEA:38583"/>
        <dbReference type="ChEBI" id="CHEBI:15377"/>
        <dbReference type="ChEBI" id="CHEBI:15378"/>
        <dbReference type="ChEBI" id="CHEBI:30616"/>
        <dbReference type="ChEBI" id="CHEBI:43474"/>
        <dbReference type="ChEBI" id="CHEBI:57643"/>
        <dbReference type="ChEBI" id="CHEBI:456216"/>
    </reaction>
    <physiologicalReaction direction="left-to-right" evidence="15">
        <dbReference type="Rhea" id="RHEA:38584"/>
    </physiologicalReaction>
</comment>
<comment type="catalytic activity">
    <reaction evidence="15">
        <text>a 1,2-diacyl-sn-glycero-3-phosphoethanolamine(out) + ATP + H2O = a 1,2-diacyl-sn-glycero-3-phosphoethanolamine(in) + ADP + phosphate + H(+)</text>
        <dbReference type="Rhea" id="RHEA:66132"/>
        <dbReference type="ChEBI" id="CHEBI:15377"/>
        <dbReference type="ChEBI" id="CHEBI:15378"/>
        <dbReference type="ChEBI" id="CHEBI:30616"/>
        <dbReference type="ChEBI" id="CHEBI:43474"/>
        <dbReference type="ChEBI" id="CHEBI:64612"/>
        <dbReference type="ChEBI" id="CHEBI:456216"/>
    </reaction>
    <physiologicalReaction direction="left-to-right" evidence="15">
        <dbReference type="Rhea" id="RHEA:66133"/>
    </physiologicalReaction>
</comment>
<comment type="cofactor">
    <cofactor evidence="3">
        <name>Mg(2+)</name>
        <dbReference type="ChEBI" id="CHEBI:18420"/>
    </cofactor>
</comment>
<comment type="subunit">
    <text evidence="10 11 12">Component of a flippase complex consisting of DNF3 and YNR048W/CRF1 (PubMed:22791719). Interacts with YNR048W/CRF1; the interaction is direct and required for proper expression and endoplasmic reticulum (ER) export of either partner (PubMed:17093059, PubMed:19411703, PubMed:22791719).</text>
</comment>
<comment type="interaction">
    <interactant intactId="EBI-3142">
        <id>Q12674</id>
    </interactant>
    <interactant intactId="EBI-28524">
        <id>P53740</id>
        <label>YNR048W</label>
    </interactant>
    <organismsDiffer>false</organismsDiffer>
    <experiments>4</experiments>
</comment>
<comment type="subcellular location">
    <subcellularLocation>
        <location evidence="7 10">Golgi apparatus</location>
        <location evidence="7 10">trans-Golgi network membrane</location>
        <topology evidence="5">Multi-pass membrane protein</topology>
    </subcellularLocation>
    <subcellularLocation>
        <location evidence="7 8">Endosome membrane</location>
        <topology evidence="5">Multi-pass membrane protein</topology>
    </subcellularLocation>
</comment>
<comment type="disruption phenotype">
    <text evidence="8">Decreases phosphatidylcholine and phosphatidylethanolamine flippase activity in secretory vesicles; simultaneous knockout of DRS2 exacerbates the effect.</text>
</comment>
<comment type="similarity">
    <text evidence="14">Belongs to the cation transport ATPase (P-type) (TC 3.A.3) family. Type IV subfamily.</text>
</comment>
<evidence type="ECO:0000250" key="1">
    <source>
        <dbReference type="UniProtKB" id="P04191"/>
    </source>
</evidence>
<evidence type="ECO:0000250" key="2">
    <source>
        <dbReference type="UniProtKB" id="P32660"/>
    </source>
</evidence>
<evidence type="ECO:0000250" key="3">
    <source>
        <dbReference type="UniProtKB" id="P39524"/>
    </source>
</evidence>
<evidence type="ECO:0000250" key="4">
    <source>
        <dbReference type="UniProtKB" id="Q9Y2Q0"/>
    </source>
</evidence>
<evidence type="ECO:0000255" key="5"/>
<evidence type="ECO:0000256" key="6">
    <source>
        <dbReference type="SAM" id="MobiDB-lite"/>
    </source>
</evidence>
<evidence type="ECO:0000269" key="7">
    <source>
    </source>
</evidence>
<evidence type="ECO:0000269" key="8">
    <source>
    </source>
</evidence>
<evidence type="ECO:0000269" key="9">
    <source>
    </source>
</evidence>
<evidence type="ECO:0000269" key="10">
    <source>
    </source>
</evidence>
<evidence type="ECO:0000269" key="11">
    <source>
    </source>
</evidence>
<evidence type="ECO:0000269" key="12">
    <source>
    </source>
</evidence>
<evidence type="ECO:0000303" key="13">
    <source>
    </source>
</evidence>
<evidence type="ECO:0000305" key="14"/>
<evidence type="ECO:0000305" key="15">
    <source>
    </source>
</evidence>
<evidence type="ECO:0000305" key="16">
    <source>
    </source>
</evidence>
<evidence type="ECO:0000305" key="17">
    <source>
    </source>
</evidence>
<evidence type="ECO:0007744" key="18">
    <source>
    </source>
</evidence>
<name>ATC8_YEAST</name>
<proteinExistence type="evidence at protein level"/>